<protein>
    <recommendedName>
        <fullName>Guanine nucleotide exchange protein smcr8a</fullName>
    </recommendedName>
    <alternativeName>
        <fullName>Smith-Magenis syndrome chromosomal region candidate gene 8 protein homolog A</fullName>
    </alternativeName>
</protein>
<sequence length="853" mass="95427">MIGSPDVVAFTKEDDFGDSFSDPLSLPDEFSVPLFTHAANANPWTKTSYAKFSKDFILISEFSEQVGPQPLLTIPSDPKVCGTFDLNYFSLRIMSVDYQASFVGHPPGSNYPKLNFVEDSKVVLGDSKEGAFAYVHHLTLYDLEARGFVRPFCMAYISADERKIMQQFQELSSEFSKASECLKSGNRKAFANELEKKLKDLEYTRSVLHKETELQKMNNGCYSTQAIEKANELANVEKSIYEHKDLLRQITSYPSRRKRDVDFVQCEAEKPPVMDETLKDTNPSDSAENTVETESRKSSYTPQLIKAKSAKCFDKRLKTLEELCDTSFFLQTLEQLNAVEKSFRGDLCFIYTSQIDRALVSKQRVTSFLFEAEHDWEDGGASKNFSIPSNNPTIPILNFSGEPLSLDSYTTCIDVDHLKPGVESGEGPPESSTSDITQETSEAADTETKGSFSSDKSIEALGSVSPSSLQTNFFDGLERRSKISIPSYSDNASSSIAVPHRRSDGNLVQMDAACCIGQDGFIFEDPLPELAQECCGDTVVNQEPLSLLHGDPALQMDYILEESPNMGLTFSELNTSVLSEEVAKINIEDVFDRTSFMSISTSSDRAVSPFTYGSALTVKQKKKAGHSALRFIRQYPFAQQAISCLLSGRTLVILGVDEGTVRKLVNALFIFVPNLGKYGETVQPWLSTPFQLTDLQRWKLIGLQRAVSPAGSSILHSLNRYSRYISILDCDNKTLRCPPYKGTLISHLADHRTQIKRGSTYFLHIQGMLTQLTAKAFLYTFCHHIHLPMDINDQGSVTSRRTNFLLQLGYTVEESKIIQYLSELIKQHYIHGSAKVGNPSFSFNYTTSYLYKI</sequence>
<comment type="function">
    <text evidence="1">Component of the C9orf72-SMCR8 complex, a complex that has guanine nucleotide exchange factor (GEF) activity and regulates autophagy. In the complex, C9orf72 and SMCR8 probably constitute the catalytic subunits that promote the exchange of GDP to GTP, converting inactive GDP-bound RAB8A and RAB39B into their active GTP-bound form, thereby promoting autophagosome maturation. The C9orf72-SMCR8 complex also acts as a negative regulator of autophagy initiation by interacting with the ATG1/ULK1 kinase complex and inhibiting its protein kinase activity.</text>
</comment>
<comment type="subunit">
    <text evidence="1">Component of the C9orf72-SMCR8 complex. The C9orf72-SMCR8 complex associates with the ATG1/ULK1 kinase complex.</text>
</comment>
<comment type="subcellular location">
    <subcellularLocation>
        <location evidence="1">Cytoplasm</location>
    </subcellularLocation>
    <subcellularLocation>
        <location evidence="1">Nucleus</location>
    </subcellularLocation>
    <text evidence="1">Localizes mainly in the cytoplasm.</text>
</comment>
<comment type="similarity">
    <text evidence="4">Belongs to the SMCR8 family.</text>
</comment>
<organism>
    <name type="scientific">Danio rerio</name>
    <name type="common">Zebrafish</name>
    <name type="synonym">Brachydanio rerio</name>
    <dbReference type="NCBI Taxonomy" id="7955"/>
    <lineage>
        <taxon>Eukaryota</taxon>
        <taxon>Metazoa</taxon>
        <taxon>Chordata</taxon>
        <taxon>Craniata</taxon>
        <taxon>Vertebrata</taxon>
        <taxon>Euteleostomi</taxon>
        <taxon>Actinopterygii</taxon>
        <taxon>Neopterygii</taxon>
        <taxon>Teleostei</taxon>
        <taxon>Ostariophysi</taxon>
        <taxon>Cypriniformes</taxon>
        <taxon>Danionidae</taxon>
        <taxon>Danioninae</taxon>
        <taxon>Danio</taxon>
    </lineage>
</organism>
<evidence type="ECO:0000250" key="1">
    <source>
        <dbReference type="UniProtKB" id="Q8TEV9"/>
    </source>
</evidence>
<evidence type="ECO:0000255" key="2">
    <source>
        <dbReference type="PROSITE-ProRule" id="PRU01178"/>
    </source>
</evidence>
<evidence type="ECO:0000256" key="3">
    <source>
        <dbReference type="SAM" id="MobiDB-lite"/>
    </source>
</evidence>
<evidence type="ECO:0000305" key="4"/>
<keyword id="KW-0072">Autophagy</keyword>
<keyword id="KW-0963">Cytoplasm</keyword>
<keyword id="KW-0344">Guanine-nucleotide releasing factor</keyword>
<keyword id="KW-0539">Nucleus</keyword>
<keyword id="KW-1185">Reference proteome</keyword>
<accession>E7FA21</accession>
<name>SMR8A_DANRE</name>
<proteinExistence type="inferred from homology"/>
<dbReference type="EMBL" id="BX649440">
    <property type="status" value="NOT_ANNOTATED_CDS"/>
    <property type="molecule type" value="Genomic_DNA"/>
</dbReference>
<dbReference type="RefSeq" id="NP_001340784.1">
    <property type="nucleotide sequence ID" value="NM_001353855.1"/>
</dbReference>
<dbReference type="RefSeq" id="XP_687034.3">
    <property type="nucleotide sequence ID" value="XM_681942.8"/>
</dbReference>
<dbReference type="SMR" id="E7FA21"/>
<dbReference type="FunCoup" id="E7FA21">
    <property type="interactions" value="1218"/>
</dbReference>
<dbReference type="STRING" id="7955.ENSDARP00000069232"/>
<dbReference type="PaxDb" id="7955-ENSDARP00000069232"/>
<dbReference type="Ensembl" id="ENSDART00000074746">
    <property type="protein sequence ID" value="ENSDARP00000069232"/>
    <property type="gene ID" value="ENSDARG00000052818"/>
</dbReference>
<dbReference type="GeneID" id="558696"/>
<dbReference type="eggNOG" id="ENOG502QSW2">
    <property type="taxonomic scope" value="Eukaryota"/>
</dbReference>
<dbReference type="HOGENOM" id="CLU_013891_0_0_1"/>
<dbReference type="InParanoid" id="E7FA21"/>
<dbReference type="OMA" id="KPVKHWV"/>
<dbReference type="OrthoDB" id="2289278at2759"/>
<dbReference type="PhylomeDB" id="E7FA21"/>
<dbReference type="TreeFam" id="TF330880"/>
<dbReference type="PRO" id="PR:E7FA21"/>
<dbReference type="Proteomes" id="UP000000437">
    <property type="component" value="Chromosome 3"/>
</dbReference>
<dbReference type="Bgee" id="ENSDARG00000052818">
    <property type="expression patterns" value="Expressed in blastula and 20 other cell types or tissues"/>
</dbReference>
<dbReference type="GO" id="GO:0005737">
    <property type="term" value="C:cytoplasm"/>
    <property type="evidence" value="ECO:0007669"/>
    <property type="project" value="UniProtKB-SubCell"/>
</dbReference>
<dbReference type="GO" id="GO:0032045">
    <property type="term" value="C:guanyl-nucleotide exchange factor complex"/>
    <property type="evidence" value="ECO:0000318"/>
    <property type="project" value="GO_Central"/>
</dbReference>
<dbReference type="GO" id="GO:0005634">
    <property type="term" value="C:nucleus"/>
    <property type="evidence" value="ECO:0007669"/>
    <property type="project" value="UniProtKB-SubCell"/>
</dbReference>
<dbReference type="GO" id="GO:0005096">
    <property type="term" value="F:GTPase activator activity"/>
    <property type="evidence" value="ECO:0007669"/>
    <property type="project" value="InterPro"/>
</dbReference>
<dbReference type="GO" id="GO:0005085">
    <property type="term" value="F:guanyl-nucleotide exchange factor activity"/>
    <property type="evidence" value="ECO:0007669"/>
    <property type="project" value="UniProtKB-KW"/>
</dbReference>
<dbReference type="GO" id="GO:0006914">
    <property type="term" value="P:autophagy"/>
    <property type="evidence" value="ECO:0007669"/>
    <property type="project" value="UniProtKB-KW"/>
</dbReference>
<dbReference type="InterPro" id="IPR037521">
    <property type="entry name" value="FLCN/SMCR8_DENN"/>
</dbReference>
<dbReference type="InterPro" id="IPR037520">
    <property type="entry name" value="Folliculin/SMCR8_longin"/>
</dbReference>
<dbReference type="PANTHER" id="PTHR31334:SF1">
    <property type="entry name" value="GUANINE NUCLEOTIDE EXCHANGE PROTEIN SMCR8"/>
    <property type="match status" value="1"/>
</dbReference>
<dbReference type="PANTHER" id="PTHR31334">
    <property type="entry name" value="SMITH-MAGENIS SYNDROME REGION GENE 8 PROTEIN"/>
    <property type="match status" value="1"/>
</dbReference>
<dbReference type="Pfam" id="PF11704">
    <property type="entry name" value="Folliculin"/>
    <property type="match status" value="1"/>
</dbReference>
<dbReference type="PROSITE" id="PS51834">
    <property type="entry name" value="DENN_FLCN_SMCR8"/>
    <property type="match status" value="1"/>
</dbReference>
<reference key="1">
    <citation type="journal article" date="2013" name="Nature">
        <title>The zebrafish reference genome sequence and its relationship to the human genome.</title>
        <authorList>
            <person name="Howe K."/>
            <person name="Clark M.D."/>
            <person name="Torroja C.F."/>
            <person name="Torrance J."/>
            <person name="Berthelot C."/>
            <person name="Muffato M."/>
            <person name="Collins J.E."/>
            <person name="Humphray S."/>
            <person name="McLaren K."/>
            <person name="Matthews L."/>
            <person name="McLaren S."/>
            <person name="Sealy I."/>
            <person name="Caccamo M."/>
            <person name="Churcher C."/>
            <person name="Scott C."/>
            <person name="Barrett J.C."/>
            <person name="Koch R."/>
            <person name="Rauch G.J."/>
            <person name="White S."/>
            <person name="Chow W."/>
            <person name="Kilian B."/>
            <person name="Quintais L.T."/>
            <person name="Guerra-Assuncao J.A."/>
            <person name="Zhou Y."/>
            <person name="Gu Y."/>
            <person name="Yen J."/>
            <person name="Vogel J.H."/>
            <person name="Eyre T."/>
            <person name="Redmond S."/>
            <person name="Banerjee R."/>
            <person name="Chi J."/>
            <person name="Fu B."/>
            <person name="Langley E."/>
            <person name="Maguire S.F."/>
            <person name="Laird G.K."/>
            <person name="Lloyd D."/>
            <person name="Kenyon E."/>
            <person name="Donaldson S."/>
            <person name="Sehra H."/>
            <person name="Almeida-King J."/>
            <person name="Loveland J."/>
            <person name="Trevanion S."/>
            <person name="Jones M."/>
            <person name="Quail M."/>
            <person name="Willey D."/>
            <person name="Hunt A."/>
            <person name="Burton J."/>
            <person name="Sims S."/>
            <person name="McLay K."/>
            <person name="Plumb B."/>
            <person name="Davis J."/>
            <person name="Clee C."/>
            <person name="Oliver K."/>
            <person name="Clark R."/>
            <person name="Riddle C."/>
            <person name="Elliot D."/>
            <person name="Threadgold G."/>
            <person name="Harden G."/>
            <person name="Ware D."/>
            <person name="Begum S."/>
            <person name="Mortimore B."/>
            <person name="Kerry G."/>
            <person name="Heath P."/>
            <person name="Phillimore B."/>
            <person name="Tracey A."/>
            <person name="Corby N."/>
            <person name="Dunn M."/>
            <person name="Johnson C."/>
            <person name="Wood J."/>
            <person name="Clark S."/>
            <person name="Pelan S."/>
            <person name="Griffiths G."/>
            <person name="Smith M."/>
            <person name="Glithero R."/>
            <person name="Howden P."/>
            <person name="Barker N."/>
            <person name="Lloyd C."/>
            <person name="Stevens C."/>
            <person name="Harley J."/>
            <person name="Holt K."/>
            <person name="Panagiotidis G."/>
            <person name="Lovell J."/>
            <person name="Beasley H."/>
            <person name="Henderson C."/>
            <person name="Gordon D."/>
            <person name="Auger K."/>
            <person name="Wright D."/>
            <person name="Collins J."/>
            <person name="Raisen C."/>
            <person name="Dyer L."/>
            <person name="Leung K."/>
            <person name="Robertson L."/>
            <person name="Ambridge K."/>
            <person name="Leongamornlert D."/>
            <person name="McGuire S."/>
            <person name="Gilderthorp R."/>
            <person name="Griffiths C."/>
            <person name="Manthravadi D."/>
            <person name="Nichol S."/>
            <person name="Barker G."/>
            <person name="Whitehead S."/>
            <person name="Kay M."/>
            <person name="Brown J."/>
            <person name="Murnane C."/>
            <person name="Gray E."/>
            <person name="Humphries M."/>
            <person name="Sycamore N."/>
            <person name="Barker D."/>
            <person name="Saunders D."/>
            <person name="Wallis J."/>
            <person name="Babbage A."/>
            <person name="Hammond S."/>
            <person name="Mashreghi-Mohammadi M."/>
            <person name="Barr L."/>
            <person name="Martin S."/>
            <person name="Wray P."/>
            <person name="Ellington A."/>
            <person name="Matthews N."/>
            <person name="Ellwood M."/>
            <person name="Woodmansey R."/>
            <person name="Clark G."/>
            <person name="Cooper J."/>
            <person name="Tromans A."/>
            <person name="Grafham D."/>
            <person name="Skuce C."/>
            <person name="Pandian R."/>
            <person name="Andrews R."/>
            <person name="Harrison E."/>
            <person name="Kimberley A."/>
            <person name="Garnett J."/>
            <person name="Fosker N."/>
            <person name="Hall R."/>
            <person name="Garner P."/>
            <person name="Kelly D."/>
            <person name="Bird C."/>
            <person name="Palmer S."/>
            <person name="Gehring I."/>
            <person name="Berger A."/>
            <person name="Dooley C.M."/>
            <person name="Ersan-Urun Z."/>
            <person name="Eser C."/>
            <person name="Geiger H."/>
            <person name="Geisler M."/>
            <person name="Karotki L."/>
            <person name="Kirn A."/>
            <person name="Konantz J."/>
            <person name="Konantz M."/>
            <person name="Oberlander M."/>
            <person name="Rudolph-Geiger S."/>
            <person name="Teucke M."/>
            <person name="Lanz C."/>
            <person name="Raddatz G."/>
            <person name="Osoegawa K."/>
            <person name="Zhu B."/>
            <person name="Rapp A."/>
            <person name="Widaa S."/>
            <person name="Langford C."/>
            <person name="Yang F."/>
            <person name="Schuster S.C."/>
            <person name="Carter N.P."/>
            <person name="Harrow J."/>
            <person name="Ning Z."/>
            <person name="Herrero J."/>
            <person name="Searle S.M."/>
            <person name="Enright A."/>
            <person name="Geisler R."/>
            <person name="Plasterk R.H."/>
            <person name="Lee C."/>
            <person name="Westerfield M."/>
            <person name="de Jong P.J."/>
            <person name="Zon L.I."/>
            <person name="Postlethwait J.H."/>
            <person name="Nusslein-Volhard C."/>
            <person name="Hubbard T.J."/>
            <person name="Roest Crollius H."/>
            <person name="Rogers J."/>
            <person name="Stemple D.L."/>
        </authorList>
    </citation>
    <scope>NUCLEOTIDE SEQUENCE [LARGE SCALE GENOMIC DNA]</scope>
    <source>
        <strain>Tuebingen</strain>
    </source>
</reference>
<feature type="chain" id="PRO_0000439892" description="Guanine nucleotide exchange protein smcr8a">
    <location>
        <begin position="1"/>
        <end position="853"/>
    </location>
</feature>
<feature type="domain" description="uDENN FLCN/SMCR8-type" evidence="2">
    <location>
        <begin position="47"/>
        <end position="219"/>
    </location>
</feature>
<feature type="domain" description="cDENN FLCN/SMCR8-type" evidence="2">
    <location>
        <begin position="316"/>
        <end position="753"/>
    </location>
</feature>
<feature type="domain" description="dDENN FLCN/SMCR8-type" evidence="2">
    <location>
        <begin position="762"/>
        <end position="826"/>
    </location>
</feature>
<feature type="region of interest" description="Disordered" evidence="3">
    <location>
        <begin position="272"/>
        <end position="298"/>
    </location>
</feature>
<feature type="region of interest" description="Disordered" evidence="3">
    <location>
        <begin position="418"/>
        <end position="454"/>
    </location>
</feature>
<feature type="compositionally biased region" description="Polar residues" evidence="3">
    <location>
        <begin position="280"/>
        <end position="298"/>
    </location>
</feature>
<feature type="compositionally biased region" description="Low complexity" evidence="3">
    <location>
        <begin position="421"/>
        <end position="432"/>
    </location>
</feature>
<feature type="compositionally biased region" description="Polar residues" evidence="3">
    <location>
        <begin position="433"/>
        <end position="454"/>
    </location>
</feature>
<gene>
    <name type="primary">smcr8a</name>
</gene>